<reference key="1">
    <citation type="journal article" date="1980" name="J. Biol. Chem.">
        <title>Molecular cloning of DNA complementary to bovine growth hormone mRNA.</title>
        <authorList>
            <person name="Miller W.L."/>
            <person name="Martial J.A."/>
            <person name="Baxter J.D."/>
        </authorList>
    </citation>
    <scope>NUCLEOTIDE SEQUENCE [MRNA]</scope>
</reference>
<reference key="2">
    <citation type="journal article" date="1982" name="Nucleic Acids Res.">
        <title>Cloning and nucleotide sequencing of the bovine growth hormone gene.</title>
        <authorList>
            <person name="Woychik R.P."/>
            <person name="Camper S.A."/>
            <person name="Lyons R.H."/>
            <person name="Horowitz S."/>
            <person name="Goodwin E.C."/>
            <person name="Rottman F.M."/>
        </authorList>
    </citation>
    <scope>NUCLEOTIDE SEQUENCE [GENOMIC DNA]</scope>
</reference>
<reference key="3">
    <citation type="journal article" date="1983" name="DNA">
        <title>Efficient bacterial expression of bovine and porcine growth hormones.</title>
        <authorList>
            <person name="Seeburg P.H."/>
            <person name="Sias S."/>
            <person name="Adelman J."/>
            <person name="de Boer H.A."/>
            <person name="Hayflick J."/>
            <person name="Jhurani P."/>
            <person name="Goeddel D.V."/>
            <person name="Heyneker H.L."/>
        </authorList>
    </citation>
    <scope>NUCLEOTIDE SEQUENCE [MRNA]</scope>
</reference>
<reference key="4">
    <citation type="journal article" date="1983" name="Mol. Cell. Endocrinol.">
        <title>Nucleotide sequence of the bovine growth hormone chromosomal gene.</title>
        <authorList>
            <person name="Gordon D.F."/>
            <person name="Quick D.P."/>
            <person name="Erwin C.R."/>
            <person name="Donelson J.E."/>
            <person name="Maurer R.A."/>
        </authorList>
    </citation>
    <scope>NUCLEOTIDE SEQUENCE [GENOMIC DNA]</scope>
    <source>
        <tissue>Liver</tissue>
    </source>
</reference>
<reference key="5">
    <citation type="journal article" date="1985" name="Mol. Biol. (Mosk.)">
        <title>Genetic engineering of peptide hormones.</title>
        <authorList>
            <person name="Rubtsov P.M."/>
            <person name="Chernov B.K."/>
            <person name="Gorbulev V.G."/>
            <person name="Parsadanyan A.S."/>
            <person name="Sverdlova P.S."/>
            <person name="Chupeeva V.V."/>
            <person name="Golova Y.B."/>
            <person name="Batchikova N.V."/>
            <person name="Zhvirblis G.S."/>
            <person name="Skryabin K.G."/>
            <person name="Baev A.A."/>
        </authorList>
    </citation>
    <scope>NUCLEOTIDE SEQUENCE [MRNA]</scope>
</reference>
<reference key="6">
    <citation type="submission" date="1997-11" db="EMBL/GenBank/DDBJ databases">
        <title>The complete sequence of a cDNA encoding the bovine growth hormone.</title>
        <authorList>
            <person name="Mauro S.M.Z."/>
            <person name="Ferro M.I.T."/>
            <person name="Macari M."/>
            <person name="Ferro J.A."/>
        </authorList>
    </citation>
    <scope>NUCLEOTIDE SEQUENCE [MRNA]</scope>
    <source>
        <strain>Nelore</strain>
        <tissue>Pituitary</tissue>
    </source>
</reference>
<reference key="7">
    <citation type="submission" date="2005-08" db="EMBL/GenBank/DDBJ databases">
        <title>Cloning the cDNA of bovine growth hormone gene in E. coli.</title>
        <authorList>
            <person name="Javadmanesh A."/>
            <person name="Nassiry M."/>
            <person name="Eftekhari Shahrudi F."/>
            <person name="Basami M."/>
        </authorList>
    </citation>
    <scope>NUCLEOTIDE SEQUENCE [MRNA]</scope>
    <source>
        <tissue>Pituitary</tissue>
    </source>
</reference>
<reference key="8">
    <citation type="submission" date="2007-02" db="EMBL/GenBank/DDBJ databases">
        <title>Cloning and sequencing of the growth hormone gene of Pakistani cow breeds (Bos taurus).</title>
        <authorList>
            <person name="Mahmood S.F."/>
            <person name="Awan I.N."/>
            <person name="Khan M.J."/>
            <person name="Shahzad M.I."/>
            <person name="Khanum A."/>
        </authorList>
    </citation>
    <scope>NUCLEOTIDE SEQUENCE [MRNA]</scope>
    <source>
        <strain>Shiwal</strain>
        <strain>Tharri malir</strain>
        <tissue>Pituitary</tissue>
    </source>
</reference>
<reference key="9">
    <citation type="journal article" date="1973" name="FEBS Lett.">
        <title>The primary structure of bovine growth hormone.</title>
        <authorList>
            <person name="Wallis M."/>
        </authorList>
    </citation>
    <scope>PROTEIN SEQUENCE OF 27-217</scope>
    <scope>VARIANT VAL-153</scope>
</reference>
<reference key="10">
    <citation type="journal article" date="1973" name="Eur. J. Biochem.">
        <title>Primary structure of bovine growth hormone.</title>
        <authorList>
            <person name="Santome J.A."/>
            <person name="Dellacha J.M."/>
            <person name="Paladini A.C."/>
            <person name="Pena C."/>
            <person name="Biscoglio M.J."/>
            <person name="Daurat S.T."/>
            <person name="Poskus E."/>
            <person name="Wolfenstein C.E.M."/>
        </authorList>
    </citation>
    <scope>PROTEIN SEQUENCE OF 27-217</scope>
</reference>
<reference key="11">
    <citation type="journal article" date="1985" name="DNA">
        <title>High-level expression in Escherichia coli of biologically active bovine growth hormone.</title>
        <authorList>
            <person name="George H.J."/>
            <person name="L'Italien J.J."/>
            <person name="Pilacinski W.P."/>
            <person name="Glassman D.L."/>
            <person name="Krzyzek R.A."/>
        </authorList>
    </citation>
    <scope>NUCLEOTIDE SEQUENCE [MRNA] OF 27-49</scope>
</reference>
<reference key="12">
    <citation type="journal article" date="1974" name="Biochem. Biophys. Res. Commun.">
        <title>On the primary structure of pituitary bovine growth hormone.</title>
        <authorList>
            <person name="Graf L."/>
            <person name="Li C.H."/>
        </authorList>
    </citation>
    <scope>PROTEIN SEQUENCE OF 91-96 AND 104-121</scope>
</reference>
<reference key="13">
    <citation type="journal article" date="1971" name="Biochem. Biophys. Res. Commun.">
        <title>Bovine growth hormone: evidence for two allelic forms.</title>
        <authorList>
            <person name="Seavey B.K."/>
            <person name="Singh R.N.P."/>
            <person name="Lewis U.J."/>
            <person name="Geschwind I.I."/>
        </authorList>
    </citation>
    <scope>EVIDENCE FOR TWO ALLELIC CHAINS</scope>
</reference>
<reference key="14">
    <citation type="journal article" date="1975" name="J. Biol. Chem.">
        <title>Studies on the common active site of growth hormone. Revision of the amino acid sequence of an active fragment of bovine growth hormone.</title>
        <authorList>
            <person name="Yamasaki N."/>
            <person name="Shimanaka J."/>
            <person name="Sonenburg M."/>
        </authorList>
    </citation>
    <scope>CHARACTERIZATION</scope>
</reference>
<reference key="15">
    <citation type="journal article" date="1991" name="Biochemistry">
        <title>A heuristic approach to predicting the tertiary structure of bovine somatotropin.</title>
        <authorList>
            <person name="Carlacci L."/>
            <person name="Chou K.-C."/>
            <person name="Maggiora G.M."/>
        </authorList>
    </citation>
    <scope>3D-STRUCTURE MODELING</scope>
</reference>
<evidence type="ECO:0000250" key="1"/>
<evidence type="ECO:0000250" key="2">
    <source>
        <dbReference type="UniProtKB" id="P01241"/>
    </source>
</evidence>
<evidence type="ECO:0000269" key="3">
    <source>
    </source>
</evidence>
<evidence type="ECO:0000269" key="4">
    <source>
    </source>
</evidence>
<evidence type="ECO:0000305" key="5"/>
<accession>P01246</accession>
<accession>A4GX96</accession>
<accession>Q28117</accession>
<accession>Q3LS73</accession>
<protein>
    <recommendedName>
        <fullName>Somatotropin</fullName>
    </recommendedName>
    <alternativeName>
        <fullName>Growth hormone</fullName>
    </alternativeName>
</protein>
<organism>
    <name type="scientific">Bos taurus</name>
    <name type="common">Bovine</name>
    <dbReference type="NCBI Taxonomy" id="9913"/>
    <lineage>
        <taxon>Eukaryota</taxon>
        <taxon>Metazoa</taxon>
        <taxon>Chordata</taxon>
        <taxon>Craniata</taxon>
        <taxon>Vertebrata</taxon>
        <taxon>Euteleostomi</taxon>
        <taxon>Mammalia</taxon>
        <taxon>Eutheria</taxon>
        <taxon>Laurasiatheria</taxon>
        <taxon>Artiodactyla</taxon>
        <taxon>Ruminantia</taxon>
        <taxon>Pecora</taxon>
        <taxon>Bovidae</taxon>
        <taxon>Bovinae</taxon>
        <taxon>Bos</taxon>
    </lineage>
</organism>
<proteinExistence type="evidence at protein level"/>
<comment type="function">
    <text>Plays an important role in growth control. Its major role in stimulating body growth is to stimulate the liver and other tissues to secrete IGF1. It stimulates both the differentiation and proliferation of myoblasts. It also stimulates amino acid uptake and protein synthesis in muscle and other tissues.</text>
</comment>
<comment type="subcellular location">
    <subcellularLocation>
        <location>Secreted</location>
    </subcellularLocation>
</comment>
<comment type="similarity">
    <text evidence="5">Belongs to the somatotropin/prolactin family.</text>
</comment>
<dbReference type="EMBL" id="V00111">
    <property type="protein sequence ID" value="CAA23445.1"/>
    <property type="molecule type" value="mRNA"/>
</dbReference>
<dbReference type="EMBL" id="J00008">
    <property type="protein sequence ID" value="AAA30542.1"/>
    <property type="molecule type" value="Genomic_DNA"/>
</dbReference>
<dbReference type="EMBL" id="M27325">
    <property type="protein sequence ID" value="AAA30543.1"/>
    <property type="molecule type" value="mRNA"/>
</dbReference>
<dbReference type="EMBL" id="M57764">
    <property type="protein sequence ID" value="AAA30544.1"/>
    <property type="molecule type" value="Genomic_DNA"/>
</dbReference>
<dbReference type="EMBL" id="M23813">
    <property type="protein sequence ID" value="AAA30556.1"/>
    <property type="molecule type" value="mRNA"/>
</dbReference>
<dbReference type="EMBL" id="AF034386">
    <property type="protein sequence ID" value="AAB92549.1"/>
    <property type="molecule type" value="mRNA"/>
</dbReference>
<dbReference type="EMBL" id="DQ184480">
    <property type="protein sequence ID" value="ABA26924.1"/>
    <property type="molecule type" value="mRNA"/>
</dbReference>
<dbReference type="EMBL" id="EF451795">
    <property type="protein sequence ID" value="ABO21739.1"/>
    <property type="molecule type" value="mRNA"/>
</dbReference>
<dbReference type="EMBL" id="EF451796">
    <property type="protein sequence ID" value="ABO21740.1"/>
    <property type="molecule type" value="mRNA"/>
</dbReference>
<dbReference type="EMBL" id="M11558">
    <property type="protein sequence ID" value="AAA30545.1"/>
    <property type="molecule type" value="mRNA"/>
</dbReference>
<dbReference type="PIR" id="I45900">
    <property type="entry name" value="STBO"/>
</dbReference>
<dbReference type="RefSeq" id="NP_851339.1">
    <property type="nucleotide sequence ID" value="NM_180996.1"/>
</dbReference>
<dbReference type="BMRB" id="P01246"/>
<dbReference type="SMR" id="P01246"/>
<dbReference type="FunCoup" id="P01246">
    <property type="interactions" value="142"/>
</dbReference>
<dbReference type="STRING" id="9913.ENSBTAP00000061093"/>
<dbReference type="MetOSite" id="P01246"/>
<dbReference type="PaxDb" id="9913-ENSBTAP00000022885"/>
<dbReference type="GeneID" id="280804"/>
<dbReference type="KEGG" id="biu:109574543"/>
<dbReference type="KEGG" id="bta:280804"/>
<dbReference type="CTD" id="2688"/>
<dbReference type="eggNOG" id="ENOG502R5GJ">
    <property type="taxonomic scope" value="Eukaryota"/>
</dbReference>
<dbReference type="HOGENOM" id="CLU_088274_2_1_1"/>
<dbReference type="InParanoid" id="P01246"/>
<dbReference type="OrthoDB" id="9925773at2759"/>
<dbReference type="TreeFam" id="TF332592"/>
<dbReference type="Proteomes" id="UP000009136">
    <property type="component" value="Unplaced"/>
</dbReference>
<dbReference type="GO" id="GO:0005615">
    <property type="term" value="C:extracellular space"/>
    <property type="evidence" value="ECO:0000314"/>
    <property type="project" value="AgBase"/>
</dbReference>
<dbReference type="GO" id="GO:0008083">
    <property type="term" value="F:growth factor activity"/>
    <property type="evidence" value="ECO:0000318"/>
    <property type="project" value="GO_Central"/>
</dbReference>
<dbReference type="GO" id="GO:0005131">
    <property type="term" value="F:growth hormone receptor binding"/>
    <property type="evidence" value="ECO:0000314"/>
    <property type="project" value="MGI"/>
</dbReference>
<dbReference type="GO" id="GO:0005179">
    <property type="term" value="F:hormone activity"/>
    <property type="evidence" value="ECO:0000318"/>
    <property type="project" value="GO_Central"/>
</dbReference>
<dbReference type="GO" id="GO:0046872">
    <property type="term" value="F:metal ion binding"/>
    <property type="evidence" value="ECO:0007669"/>
    <property type="project" value="UniProtKB-KW"/>
</dbReference>
<dbReference type="GO" id="GO:0048513">
    <property type="term" value="P:animal organ development"/>
    <property type="evidence" value="ECO:0000318"/>
    <property type="project" value="GO_Central"/>
</dbReference>
<dbReference type="GO" id="GO:0008283">
    <property type="term" value="P:cell population proliferation"/>
    <property type="evidence" value="ECO:0000314"/>
    <property type="project" value="AgBase"/>
</dbReference>
<dbReference type="GO" id="GO:0060396">
    <property type="term" value="P:growth hormone receptor signaling pathway"/>
    <property type="evidence" value="ECO:0000318"/>
    <property type="project" value="GO_Central"/>
</dbReference>
<dbReference type="GO" id="GO:0030073">
    <property type="term" value="P:insulin secretion"/>
    <property type="evidence" value="ECO:0000314"/>
    <property type="project" value="AgBase"/>
</dbReference>
<dbReference type="GO" id="GO:0043066">
    <property type="term" value="P:negative regulation of apoptotic process"/>
    <property type="evidence" value="ECO:0000315"/>
    <property type="project" value="AgBase"/>
</dbReference>
<dbReference type="GO" id="GO:0045717">
    <property type="term" value="P:negative regulation of fatty acid biosynthetic process"/>
    <property type="evidence" value="ECO:0000314"/>
    <property type="project" value="AgBase"/>
</dbReference>
<dbReference type="GO" id="GO:0010629">
    <property type="term" value="P:negative regulation of gene expression"/>
    <property type="evidence" value="ECO:0000314"/>
    <property type="project" value="AgBase"/>
</dbReference>
<dbReference type="GO" id="GO:0010757">
    <property type="term" value="P:negative regulation of plasminogen activation"/>
    <property type="evidence" value="ECO:0000315"/>
    <property type="project" value="AgBase"/>
</dbReference>
<dbReference type="GO" id="GO:2000844">
    <property type="term" value="P:negative regulation of testosterone secretion"/>
    <property type="evidence" value="ECO:0000315"/>
    <property type="project" value="AgBase"/>
</dbReference>
<dbReference type="GO" id="GO:0035811">
    <property type="term" value="P:negative regulation of urine volume"/>
    <property type="evidence" value="ECO:0000314"/>
    <property type="project" value="AgBase"/>
</dbReference>
<dbReference type="GO" id="GO:2000860">
    <property type="term" value="P:positive regulation of aldosterone secretion"/>
    <property type="evidence" value="ECO:0000314"/>
    <property type="project" value="AgBase"/>
</dbReference>
<dbReference type="GO" id="GO:0045542">
    <property type="term" value="P:positive regulation of cholesterol biosynthetic process"/>
    <property type="evidence" value="ECO:0000314"/>
    <property type="project" value="GO_Central"/>
</dbReference>
<dbReference type="GO" id="GO:2000767">
    <property type="term" value="P:positive regulation of cytoplasmic translation"/>
    <property type="evidence" value="ECO:0000315"/>
    <property type="project" value="AgBase"/>
</dbReference>
<dbReference type="GO" id="GO:1900482">
    <property type="term" value="P:positive regulation of diacylglycerol biosynthetic process"/>
    <property type="evidence" value="ECO:0000314"/>
    <property type="project" value="GO_Central"/>
</dbReference>
<dbReference type="GO" id="GO:0045723">
    <property type="term" value="P:positive regulation of fatty acid biosynthetic process"/>
    <property type="evidence" value="ECO:0000314"/>
    <property type="project" value="GO_Central"/>
</dbReference>
<dbReference type="GO" id="GO:2000253">
    <property type="term" value="P:positive regulation of feeding behavior"/>
    <property type="evidence" value="ECO:0000314"/>
    <property type="project" value="AgBase"/>
</dbReference>
<dbReference type="GO" id="GO:0010628">
    <property type="term" value="P:positive regulation of gene expression"/>
    <property type="evidence" value="ECO:0000315"/>
    <property type="project" value="AgBase"/>
</dbReference>
<dbReference type="GO" id="GO:1903489">
    <property type="term" value="P:positive regulation of lactation"/>
    <property type="evidence" value="ECO:0000314"/>
    <property type="project" value="AgBase"/>
</dbReference>
<dbReference type="GO" id="GO:0050996">
    <property type="term" value="P:positive regulation of lipid catabolic process"/>
    <property type="evidence" value="ECO:0000314"/>
    <property type="project" value="AgBase"/>
</dbReference>
<dbReference type="GO" id="GO:0043410">
    <property type="term" value="P:positive regulation of MAPK cascade"/>
    <property type="evidence" value="ECO:0000315"/>
    <property type="project" value="AgBase"/>
</dbReference>
<dbReference type="GO" id="GO:0071073">
    <property type="term" value="P:positive regulation of phospholipid biosynthetic process"/>
    <property type="evidence" value="ECO:0000314"/>
    <property type="project" value="GO_Central"/>
</dbReference>
<dbReference type="GO" id="GO:0046427">
    <property type="term" value="P:positive regulation of receptor signaling pathway via JAK-STAT"/>
    <property type="evidence" value="ECO:0000318"/>
    <property type="project" value="GO_Central"/>
</dbReference>
<dbReference type="GO" id="GO:2000833">
    <property type="term" value="P:positive regulation of steroid hormone secretion"/>
    <property type="evidence" value="ECO:0000315"/>
    <property type="project" value="AgBase"/>
</dbReference>
<dbReference type="GO" id="GO:0032008">
    <property type="term" value="P:positive regulation of TOR signaling"/>
    <property type="evidence" value="ECO:0000315"/>
    <property type="project" value="AgBase"/>
</dbReference>
<dbReference type="GO" id="GO:0010867">
    <property type="term" value="P:positive regulation of triglyceride biosynthetic process"/>
    <property type="evidence" value="ECO:0000314"/>
    <property type="project" value="GO_Central"/>
</dbReference>
<dbReference type="GO" id="GO:0009306">
    <property type="term" value="P:protein secretion"/>
    <property type="evidence" value="ECO:0000314"/>
    <property type="project" value="AgBase"/>
</dbReference>
<dbReference type="GO" id="GO:0033143">
    <property type="term" value="P:regulation of intracellular steroid hormone receptor signaling pathway"/>
    <property type="evidence" value="ECO:0000314"/>
    <property type="project" value="MGI"/>
</dbReference>
<dbReference type="GO" id="GO:0070294">
    <property type="term" value="P:renal sodium ion absorption"/>
    <property type="evidence" value="ECO:0000314"/>
    <property type="project" value="AgBase"/>
</dbReference>
<dbReference type="GO" id="GO:0032094">
    <property type="term" value="P:response to food"/>
    <property type="evidence" value="ECO:0000314"/>
    <property type="project" value="AgBase"/>
</dbReference>
<dbReference type="GO" id="GO:1903576">
    <property type="term" value="P:response to L-arginine"/>
    <property type="evidence" value="ECO:0000314"/>
    <property type="project" value="AgBase"/>
</dbReference>
<dbReference type="GO" id="GO:0031667">
    <property type="term" value="P:response to nutrient levels"/>
    <property type="evidence" value="ECO:0000314"/>
    <property type="project" value="AgBase"/>
</dbReference>
<dbReference type="CDD" id="cd10285">
    <property type="entry name" value="somatotropin_like"/>
    <property type="match status" value="1"/>
</dbReference>
<dbReference type="FunFam" id="1.20.1250.10:FF:000002">
    <property type="entry name" value="Growth hormone"/>
    <property type="match status" value="1"/>
</dbReference>
<dbReference type="Gene3D" id="1.20.1250.10">
    <property type="match status" value="1"/>
</dbReference>
<dbReference type="InterPro" id="IPR009079">
    <property type="entry name" value="4_helix_cytokine-like_core"/>
</dbReference>
<dbReference type="InterPro" id="IPR034975">
    <property type="entry name" value="Somatotropin"/>
</dbReference>
<dbReference type="InterPro" id="IPR001400">
    <property type="entry name" value="Somatotropin/Prolactin"/>
</dbReference>
<dbReference type="InterPro" id="IPR018116">
    <property type="entry name" value="Somatotropin_CS"/>
</dbReference>
<dbReference type="PANTHER" id="PTHR11417:SF2">
    <property type="entry name" value="SOMATOTROPIN"/>
    <property type="match status" value="1"/>
</dbReference>
<dbReference type="PANTHER" id="PTHR11417">
    <property type="entry name" value="SOMATOTROPIN,PROLACTIN"/>
    <property type="match status" value="1"/>
</dbReference>
<dbReference type="Pfam" id="PF00103">
    <property type="entry name" value="Hormone_1"/>
    <property type="match status" value="1"/>
</dbReference>
<dbReference type="PRINTS" id="PR00836">
    <property type="entry name" value="SOMATOTROPIN"/>
</dbReference>
<dbReference type="SUPFAM" id="SSF47266">
    <property type="entry name" value="4-helical cytokines"/>
    <property type="match status" value="1"/>
</dbReference>
<dbReference type="PROSITE" id="PS00266">
    <property type="entry name" value="SOMATOTROPIN_1"/>
    <property type="match status" value="1"/>
</dbReference>
<dbReference type="PROSITE" id="PS00338">
    <property type="entry name" value="SOMATOTROPIN_2"/>
    <property type="match status" value="1"/>
</dbReference>
<sequence>MMAAGPRTSLLLAFALLCLPWTQVVGAFPAMSLSGLFANAVLRAQHLHQLAADTFKEFERTYIPEGQRYSIQNTQVAFCFSETIPAPTGKNEAQQKSDLELLRISLLLIQSWLGPLQFLSRVFTNSLVFGTSDRVYEKLKDLEEGILALMRELEDGTPRAGQILKQTYDKFDTNMRSDDALLKNYGLLSCFRKDLHKTETYLRVMKCRRFGEASCAF</sequence>
<name>SOMA_BOVIN</name>
<feature type="signal peptide" evidence="3 4">
    <location>
        <begin position="1"/>
        <end position="26"/>
    </location>
</feature>
<feature type="chain" id="PRO_0000032974" description="Somatotropin">
    <location>
        <begin position="27"/>
        <end position="217"/>
    </location>
</feature>
<feature type="binding site" evidence="1">
    <location>
        <position position="46"/>
    </location>
    <ligand>
        <name>Zn(2+)</name>
        <dbReference type="ChEBI" id="CHEBI:29105"/>
    </ligand>
</feature>
<feature type="binding site" evidence="1">
    <location>
        <position position="199"/>
    </location>
    <ligand>
        <name>Zn(2+)</name>
        <dbReference type="ChEBI" id="CHEBI:29105"/>
    </ligand>
</feature>
<feature type="modified residue" description="Phosphoserine" evidence="2">
    <location>
        <position position="132"/>
    </location>
</feature>
<feature type="disulfide bond" evidence="4">
    <location>
        <begin position="79"/>
        <end position="190"/>
    </location>
</feature>
<feature type="disulfide bond" evidence="4">
    <location>
        <begin position="207"/>
        <end position="215"/>
    </location>
</feature>
<feature type="sequence variant" description="In 30% of the molecules." evidence="4">
    <original>L</original>
    <variation>V</variation>
    <location>
        <position position="153"/>
    </location>
</feature>
<feature type="sequence conflict" description="In Ref. 10; AA sequence." evidence="5" ref="10">
    <original>Q</original>
    <variation>E</variation>
    <location>
        <position position="95"/>
    </location>
</feature>
<feature type="sequence conflict" description="In Ref. 10; AA sequence." evidence="5" ref="10">
    <original>QSWLGPLQFLS</original>
    <variation>SQWLQPGFL</variation>
    <location>
        <begin position="110"/>
        <end position="120"/>
    </location>
</feature>
<feature type="sequence conflict" description="In Ref. 10; AA sequence." evidence="5" ref="10">
    <original>D</original>
    <variation>N</variation>
    <location>
        <position position="194"/>
    </location>
</feature>
<gene>
    <name type="primary">GH1</name>
    <name type="synonym">GH</name>
</gene>
<keyword id="KW-0903">Direct protein sequencing</keyword>
<keyword id="KW-1015">Disulfide bond</keyword>
<keyword id="KW-0372">Hormone</keyword>
<keyword id="KW-0479">Metal-binding</keyword>
<keyword id="KW-0597">Phosphoprotein</keyword>
<keyword id="KW-1185">Reference proteome</keyword>
<keyword id="KW-0964">Secreted</keyword>
<keyword id="KW-0732">Signal</keyword>
<keyword id="KW-0862">Zinc</keyword>